<keyword id="KW-1003">Cell membrane</keyword>
<keyword id="KW-0169">Cobalamin biosynthesis</keyword>
<keyword id="KW-0472">Membrane</keyword>
<keyword id="KW-0812">Transmembrane</keyword>
<keyword id="KW-1133">Transmembrane helix</keyword>
<proteinExistence type="inferred from homology"/>
<protein>
    <recommendedName>
        <fullName evidence="1">Probable cobalamin biosynthesis protein CobD</fullName>
    </recommendedName>
</protein>
<organism>
    <name type="scientific">Methanococcus aeolicus (strain ATCC BAA-1280 / DSM 17508 / OCM 812 / Nankai-3)</name>
    <dbReference type="NCBI Taxonomy" id="419665"/>
    <lineage>
        <taxon>Archaea</taxon>
        <taxon>Methanobacteriati</taxon>
        <taxon>Methanobacteriota</taxon>
        <taxon>Methanomada group</taxon>
        <taxon>Methanococci</taxon>
        <taxon>Methanococcales</taxon>
        <taxon>Methanococcaceae</taxon>
        <taxon>Methanococcus</taxon>
    </lineage>
</organism>
<evidence type="ECO:0000255" key="1">
    <source>
        <dbReference type="HAMAP-Rule" id="MF_00024"/>
    </source>
</evidence>
<accession>A6UUW7</accession>
<gene>
    <name evidence="1" type="primary">cobD</name>
    <name type="ordered locus">Maeo_0706</name>
</gene>
<comment type="function">
    <text evidence="1">Converts cobyric acid to cobinamide by the addition of aminopropanol on the F carboxylic group.</text>
</comment>
<comment type="pathway">
    <text evidence="1">Cofactor biosynthesis; adenosylcobalamin biosynthesis.</text>
</comment>
<comment type="subcellular location">
    <subcellularLocation>
        <location evidence="1">Cell membrane</location>
        <topology evidence="1">Multi-pass membrane protein</topology>
    </subcellularLocation>
</comment>
<comment type="similarity">
    <text evidence="1">Belongs to the CobD/CbiB family.</text>
</comment>
<dbReference type="EMBL" id="CP000743">
    <property type="protein sequence ID" value="ABR56289.1"/>
    <property type="molecule type" value="Genomic_DNA"/>
</dbReference>
<dbReference type="RefSeq" id="WP_011973421.1">
    <property type="nucleotide sequence ID" value="NC_009635.1"/>
</dbReference>
<dbReference type="STRING" id="419665.Maeo_0706"/>
<dbReference type="GeneID" id="5326947"/>
<dbReference type="KEGG" id="mae:Maeo_0706"/>
<dbReference type="eggNOG" id="arCOG04274">
    <property type="taxonomic scope" value="Archaea"/>
</dbReference>
<dbReference type="HOGENOM" id="CLU_054212_0_2_2"/>
<dbReference type="OrthoDB" id="46105at2157"/>
<dbReference type="UniPathway" id="UPA00148"/>
<dbReference type="Proteomes" id="UP000001106">
    <property type="component" value="Chromosome"/>
</dbReference>
<dbReference type="GO" id="GO:0005886">
    <property type="term" value="C:plasma membrane"/>
    <property type="evidence" value="ECO:0007669"/>
    <property type="project" value="UniProtKB-SubCell"/>
</dbReference>
<dbReference type="GO" id="GO:0015420">
    <property type="term" value="F:ABC-type vitamin B12 transporter activity"/>
    <property type="evidence" value="ECO:0007669"/>
    <property type="project" value="UniProtKB-UniRule"/>
</dbReference>
<dbReference type="GO" id="GO:0048472">
    <property type="term" value="F:threonine-phosphate decarboxylase activity"/>
    <property type="evidence" value="ECO:0007669"/>
    <property type="project" value="InterPro"/>
</dbReference>
<dbReference type="GO" id="GO:0009236">
    <property type="term" value="P:cobalamin biosynthetic process"/>
    <property type="evidence" value="ECO:0007669"/>
    <property type="project" value="UniProtKB-UniRule"/>
</dbReference>
<dbReference type="HAMAP" id="MF_00024">
    <property type="entry name" value="CobD_CbiB"/>
    <property type="match status" value="1"/>
</dbReference>
<dbReference type="InterPro" id="IPR004485">
    <property type="entry name" value="Cobalamin_biosynth_CobD/CbiB"/>
</dbReference>
<dbReference type="NCBIfam" id="TIGR00380">
    <property type="entry name" value="cobal_cbiB"/>
    <property type="match status" value="1"/>
</dbReference>
<dbReference type="NCBIfam" id="NF002281">
    <property type="entry name" value="PRK01209.2-5"/>
    <property type="match status" value="1"/>
</dbReference>
<dbReference type="PANTHER" id="PTHR34308">
    <property type="entry name" value="COBALAMIN BIOSYNTHESIS PROTEIN CBIB"/>
    <property type="match status" value="1"/>
</dbReference>
<dbReference type="PANTHER" id="PTHR34308:SF1">
    <property type="entry name" value="COBALAMIN BIOSYNTHESIS PROTEIN CBIB"/>
    <property type="match status" value="1"/>
</dbReference>
<dbReference type="Pfam" id="PF03186">
    <property type="entry name" value="CobD_Cbib"/>
    <property type="match status" value="1"/>
</dbReference>
<feature type="chain" id="PRO_1000074379" description="Probable cobalamin biosynthesis protein CobD">
    <location>
        <begin position="1"/>
        <end position="311"/>
    </location>
</feature>
<feature type="transmembrane region" description="Helical" evidence="1">
    <location>
        <begin position="53"/>
        <end position="73"/>
    </location>
</feature>
<feature type="transmembrane region" description="Helical" evidence="1">
    <location>
        <begin position="76"/>
        <end position="96"/>
    </location>
</feature>
<feature type="transmembrane region" description="Helical" evidence="1">
    <location>
        <begin position="157"/>
        <end position="177"/>
    </location>
</feature>
<feature type="transmembrane region" description="Helical" evidence="1">
    <location>
        <begin position="288"/>
        <end position="308"/>
    </location>
</feature>
<reference key="1">
    <citation type="submission" date="2007-06" db="EMBL/GenBank/DDBJ databases">
        <title>Complete sequence of Methanococcus aeolicus Nankai-3.</title>
        <authorList>
            <consortium name="US DOE Joint Genome Institute"/>
            <person name="Copeland A."/>
            <person name="Lucas S."/>
            <person name="Lapidus A."/>
            <person name="Barry K."/>
            <person name="Glavina del Rio T."/>
            <person name="Dalin E."/>
            <person name="Tice H."/>
            <person name="Pitluck S."/>
            <person name="Chain P."/>
            <person name="Malfatti S."/>
            <person name="Shin M."/>
            <person name="Vergez L."/>
            <person name="Schmutz J."/>
            <person name="Larimer F."/>
            <person name="Land M."/>
            <person name="Hauser L."/>
            <person name="Kyrpides N."/>
            <person name="Lykidis A."/>
            <person name="Sieprawska-Lupa M."/>
            <person name="Whitman W.B."/>
            <person name="Richardson P."/>
        </authorList>
    </citation>
    <scope>NUCLEOTIDE SEQUENCE [LARGE SCALE GENOMIC DNA]</scope>
    <source>
        <strain>ATCC BAA-1280 / DSM 17508 / OCM 812 / Nankai-3</strain>
    </source>
</reference>
<sequence>MLSPIILFLSIIIDRIFGELPEKIHPTVWIGNIISFFEKILKSTHSKNKYKDFIFGTLTTISVLFIVFGAIYGVEILINNIQNIYIKYIVYSFLISTTIGYKSLLQFSKTPLNHIKNKDIESAKKSVQCIVSRNTDKLDTKHILSASIESASENITDSIIAPLFYAIFFGLEGAFIYRAINTMDAMLGYRNKKYEYYGKLPAILDDIANFIPSRISGILLVLFAPLYGGNIKKALNGFIKEGHKTPSPNSGYTMAVMANSLNMTLEKIGYYKLGNGEITLKKAYNSLFSIDVVIFSFIVLYSIYYVIFYYF</sequence>
<name>COBD_META3</name>